<organism>
    <name type="scientific">Oryza sativa subsp. indica</name>
    <name type="common">Rice</name>
    <dbReference type="NCBI Taxonomy" id="39946"/>
    <lineage>
        <taxon>Eukaryota</taxon>
        <taxon>Viridiplantae</taxon>
        <taxon>Streptophyta</taxon>
        <taxon>Embryophyta</taxon>
        <taxon>Tracheophyta</taxon>
        <taxon>Spermatophyta</taxon>
        <taxon>Magnoliopsida</taxon>
        <taxon>Liliopsida</taxon>
        <taxon>Poales</taxon>
        <taxon>Poaceae</taxon>
        <taxon>BOP clade</taxon>
        <taxon>Oryzoideae</taxon>
        <taxon>Oryzeae</taxon>
        <taxon>Oryzinae</taxon>
        <taxon>Oryza</taxon>
        <taxon>Oryza sativa</taxon>
    </lineage>
</organism>
<evidence type="ECO:0000255" key="1"/>
<evidence type="ECO:0000255" key="2">
    <source>
        <dbReference type="PROSITE-ProRule" id="PRU10067"/>
    </source>
</evidence>
<evidence type="ECO:0000305" key="3"/>
<feature type="signal peptide" evidence="1">
    <location>
        <begin position="1"/>
        <end position="26"/>
    </location>
</feature>
<feature type="chain" id="PRO_0000303012" description="Beta-fructofuranosidase, insoluble isoenzyme 3">
    <location>
        <begin position="27"/>
        <end position="586"/>
    </location>
</feature>
<feature type="active site" evidence="2">
    <location>
        <position position="61"/>
    </location>
</feature>
<feature type="glycosylation site" description="N-linked (GlcNAc...) asparagine" evidence="1">
    <location>
        <position position="154"/>
    </location>
</feature>
<feature type="glycosylation site" description="N-linked (GlcNAc...) asparagine" evidence="1">
    <location>
        <position position="179"/>
    </location>
</feature>
<feature type="glycosylation site" description="N-linked (GlcNAc...) asparagine" evidence="1">
    <location>
        <position position="341"/>
    </location>
</feature>
<feature type="glycosylation site" description="N-linked (GlcNAc...) asparagine" evidence="1">
    <location>
        <position position="390"/>
    </location>
</feature>
<feature type="glycosylation site" description="N-linked (GlcNAc...) asparagine" evidence="1">
    <location>
        <position position="479"/>
    </location>
</feature>
<feature type="sequence conflict" description="In Ref. 2; AAQ24870." evidence="3" ref="2">
    <original>E</original>
    <variation>K</variation>
    <location>
        <position position="89"/>
    </location>
</feature>
<feature type="sequence conflict" description="In Ref. 2; AAQ24870." evidence="3" ref="2">
    <original>P</original>
    <variation>L</variation>
    <location>
        <position position="152"/>
    </location>
</feature>
<feature type="sequence conflict" description="In Ref. 2; AAQ24870." evidence="3" ref="2">
    <original>Y</original>
    <variation>H</variation>
    <location>
        <position position="164"/>
    </location>
</feature>
<feature type="sequence conflict" description="In Ref. 2; AAQ24870." evidence="3" ref="2">
    <original>I</original>
    <variation>V</variation>
    <location>
        <position position="172"/>
    </location>
</feature>
<feature type="sequence conflict" description="In Ref. 2; AAQ24870." evidence="3" ref="2">
    <original>Q</original>
    <variation>R</variation>
    <location>
        <position position="375"/>
    </location>
</feature>
<accession>Q01IS8</accession>
<accession>A2XT81</accession>
<accession>Q56UD3</accession>
<accession>Q6VEF3</accession>
<accession>Q7XVJ3</accession>
<accession>Q84TL3</accession>
<sequence>MATARARAALVFVALLQMAAVVVVRASHVVYPELQSLEAKHVDGKLRTGYHFQPPKHWINDPNGPMYYKGLYHLFYQYNPKGAVWGNIEWAHSVSTDLIDWTALEPGIYPSKTFDEKGCWSGSATVLPSGVPVIMYTGIDPDERQVQNVAYPVNLSDPYLREWYKPDYNPIINPDGGINASAFRDPTTAWYGPDGHWRLLVGSKVNMKGLAVLYRSRDFKKWVKAHHPLHSAHTGMWECPDFFPVAVAGGSRHYRRGVDTAELHDAAVAEEVKYVLKVSLDLTRYEYYTVGWYDHATDRYVPDAAFPDNDYGLRYDYGDFYASKSFYDPAKRRRIVWGWANESDTVPDDRRKGWAGIQAIPRKLWLSADGKQLVQWPVEELKALRAKHVNVTDKVIKKGNYFEVTGFKSVQSDVDMAFAIKDLSKAEEFDPAWRTDAEALCKKLGSDVDGGVGPFGLWALASGDLKERTAVFFRVFKANDSSHVVLMCNDPTRSSYESKIYRPTFAGFVDVDIAKNKQIALRTLIDHSVVESFGARGKTCILTRVYPRKAVGDDAHLFVFNNGESDVKVTNLDAWEMKTPKMNAEE</sequence>
<comment type="catalytic activity">
    <reaction evidence="2">
        <text>Hydrolysis of terminal non-reducing beta-D-fructofuranoside residues in beta-D-fructofuranosides.</text>
        <dbReference type="EC" id="3.2.1.26"/>
    </reaction>
</comment>
<comment type="subcellular location">
    <subcellularLocation>
        <location evidence="3">Secreted</location>
        <location evidence="3">Extracellular space</location>
        <location evidence="3">Apoplast</location>
    </subcellularLocation>
    <subcellularLocation>
        <location evidence="3">Secreted</location>
        <location evidence="3">Cell wall</location>
    </subcellularLocation>
    <text evidence="3">Associated to the cell wall.</text>
</comment>
<comment type="similarity">
    <text evidence="3">Belongs to the glycosyl hydrolase 32 family.</text>
</comment>
<comment type="sequence caution" evidence="3">
    <conflict type="erroneous gene model prediction">
        <sequence resource="EMBL-CDS" id="CAH67362"/>
    </conflict>
</comment>
<name>INV3_ORYSI</name>
<keyword id="KW-0052">Apoplast</keyword>
<keyword id="KW-0134">Cell wall</keyword>
<keyword id="KW-0325">Glycoprotein</keyword>
<keyword id="KW-0326">Glycosidase</keyword>
<keyword id="KW-0378">Hydrolase</keyword>
<keyword id="KW-1185">Reference proteome</keyword>
<keyword id="KW-0964">Secreted</keyword>
<keyword id="KW-0732">Signal</keyword>
<dbReference type="EC" id="3.2.1.26"/>
<dbReference type="EMBL" id="AY220486">
    <property type="protein sequence ID" value="AAO63553.1"/>
    <property type="molecule type" value="Genomic_DNA"/>
</dbReference>
<dbReference type="EMBL" id="AY342320">
    <property type="protein sequence ID" value="AAQ24870.1"/>
    <property type="molecule type" value="mRNA"/>
</dbReference>
<dbReference type="EMBL" id="CR855194">
    <property type="protein sequence ID" value="CAH67362.1"/>
    <property type="status" value="ALT_SEQ"/>
    <property type="molecule type" value="Genomic_DNA"/>
</dbReference>
<dbReference type="EMBL" id="CM000129">
    <property type="status" value="NOT_ANNOTATED_CDS"/>
    <property type="molecule type" value="Genomic_DNA"/>
</dbReference>
<dbReference type="SMR" id="Q01IS8"/>
<dbReference type="STRING" id="39946.Q01IS8"/>
<dbReference type="CAZy" id="GH32">
    <property type="family name" value="Glycoside Hydrolase Family 32"/>
</dbReference>
<dbReference type="GlyCosmos" id="Q01IS8">
    <property type="glycosylation" value="5 sites, No reported glycans"/>
</dbReference>
<dbReference type="EnsemblPlants" id="BGIOSGA016363-TA">
    <property type="protein sequence ID" value="BGIOSGA016363-PA"/>
    <property type="gene ID" value="BGIOSGA016363"/>
</dbReference>
<dbReference type="EnsemblPlants" id="OsIR64_04g0012050.01">
    <property type="protein sequence ID" value="OsIR64_04g0012050.01"/>
    <property type="gene ID" value="OsIR64_04g0012050"/>
</dbReference>
<dbReference type="EnsemblPlants" id="OsLiXu_04g0012830.01">
    <property type="protein sequence ID" value="OsLiXu_04g0012830.01"/>
    <property type="gene ID" value="OsLiXu_04g0012830"/>
</dbReference>
<dbReference type="EnsemblPlants" id="OsMH63_04G013100_01">
    <property type="protein sequence ID" value="OsMH63_04G013100_01"/>
    <property type="gene ID" value="OsMH63_04G013100"/>
</dbReference>
<dbReference type="EnsemblPlants" id="OsPr106_04g0013130.01">
    <property type="protein sequence ID" value="OsPr106_04g0013130.01"/>
    <property type="gene ID" value="OsPr106_04g0013130"/>
</dbReference>
<dbReference type="EnsemblPlants" id="OsZS97_04G013240_01">
    <property type="protein sequence ID" value="OsZS97_04G013240_01"/>
    <property type="gene ID" value="OsZS97_04G013240"/>
</dbReference>
<dbReference type="Gramene" id="BGIOSGA016363-TA">
    <property type="protein sequence ID" value="BGIOSGA016363-PA"/>
    <property type="gene ID" value="BGIOSGA016363"/>
</dbReference>
<dbReference type="Gramene" id="OsIR64_04g0012050.01">
    <property type="protein sequence ID" value="OsIR64_04g0012050.01"/>
    <property type="gene ID" value="OsIR64_04g0012050"/>
</dbReference>
<dbReference type="Gramene" id="OsLiXu_04g0012830.01">
    <property type="protein sequence ID" value="OsLiXu_04g0012830.01"/>
    <property type="gene ID" value="OsLiXu_04g0012830"/>
</dbReference>
<dbReference type="Gramene" id="OsMH63_04G013100_01">
    <property type="protein sequence ID" value="OsMH63_04G013100_01"/>
    <property type="gene ID" value="OsMH63_04G013100"/>
</dbReference>
<dbReference type="Gramene" id="OsPr106_04g0013130.01">
    <property type="protein sequence ID" value="OsPr106_04g0013130.01"/>
    <property type="gene ID" value="OsPr106_04g0013130"/>
</dbReference>
<dbReference type="Gramene" id="OsZS97_04G013240_01">
    <property type="protein sequence ID" value="OsZS97_04G013240_01"/>
    <property type="gene ID" value="OsZS97_04G013240"/>
</dbReference>
<dbReference type="HOGENOM" id="CLU_001528_6_0_1"/>
<dbReference type="OMA" id="DAWEMRT"/>
<dbReference type="BRENDA" id="3.2.1.26">
    <property type="organism ID" value="4460"/>
</dbReference>
<dbReference type="Proteomes" id="UP000007015">
    <property type="component" value="Chromosome 4"/>
</dbReference>
<dbReference type="GO" id="GO:0048046">
    <property type="term" value="C:apoplast"/>
    <property type="evidence" value="ECO:0007669"/>
    <property type="project" value="UniProtKB-SubCell"/>
</dbReference>
<dbReference type="GO" id="GO:0004564">
    <property type="term" value="F:beta-fructofuranosidase activity"/>
    <property type="evidence" value="ECO:0007669"/>
    <property type="project" value="UniProtKB-EC"/>
</dbReference>
<dbReference type="GO" id="GO:0005975">
    <property type="term" value="P:carbohydrate metabolic process"/>
    <property type="evidence" value="ECO:0007669"/>
    <property type="project" value="InterPro"/>
</dbReference>
<dbReference type="CDD" id="cd18624">
    <property type="entry name" value="GH32_Fruct1-like"/>
    <property type="match status" value="1"/>
</dbReference>
<dbReference type="FunFam" id="2.115.10.20:FF:000001">
    <property type="entry name" value="Beta-fructofuranosidase, insoluble isoenzyme CWINV1"/>
    <property type="match status" value="1"/>
</dbReference>
<dbReference type="FunFam" id="2.60.120.560:FF:000002">
    <property type="entry name" value="Beta-fructofuranosidase, insoluble isoenzyme CWINV1"/>
    <property type="match status" value="1"/>
</dbReference>
<dbReference type="Gene3D" id="2.60.120.560">
    <property type="entry name" value="Exo-inulinase, domain 1"/>
    <property type="match status" value="1"/>
</dbReference>
<dbReference type="Gene3D" id="2.115.10.20">
    <property type="entry name" value="Glycosyl hydrolase domain, family 43"/>
    <property type="match status" value="1"/>
</dbReference>
<dbReference type="InterPro" id="IPR013320">
    <property type="entry name" value="ConA-like_dom_sf"/>
</dbReference>
<dbReference type="InterPro" id="IPR050551">
    <property type="entry name" value="Fructan_Metab_Enzymes"/>
</dbReference>
<dbReference type="InterPro" id="IPR001362">
    <property type="entry name" value="Glyco_hydro_32"/>
</dbReference>
<dbReference type="InterPro" id="IPR018053">
    <property type="entry name" value="Glyco_hydro_32_AS"/>
</dbReference>
<dbReference type="InterPro" id="IPR013189">
    <property type="entry name" value="Glyco_hydro_32_C"/>
</dbReference>
<dbReference type="InterPro" id="IPR013148">
    <property type="entry name" value="Glyco_hydro_32_N"/>
</dbReference>
<dbReference type="InterPro" id="IPR023296">
    <property type="entry name" value="Glyco_hydro_beta-prop_sf"/>
</dbReference>
<dbReference type="PANTHER" id="PTHR31953">
    <property type="entry name" value="BETA-FRUCTOFURANOSIDASE, INSOLUBLE ISOENZYME CWINV1-RELATED"/>
    <property type="match status" value="1"/>
</dbReference>
<dbReference type="Pfam" id="PF08244">
    <property type="entry name" value="Glyco_hydro_32C"/>
    <property type="match status" value="1"/>
</dbReference>
<dbReference type="Pfam" id="PF00251">
    <property type="entry name" value="Glyco_hydro_32N"/>
    <property type="match status" value="1"/>
</dbReference>
<dbReference type="SMART" id="SM00640">
    <property type="entry name" value="Glyco_32"/>
    <property type="match status" value="1"/>
</dbReference>
<dbReference type="SUPFAM" id="SSF75005">
    <property type="entry name" value="Arabinanase/levansucrase/invertase"/>
    <property type="match status" value="1"/>
</dbReference>
<dbReference type="SUPFAM" id="SSF49899">
    <property type="entry name" value="Concanavalin A-like lectins/glucanases"/>
    <property type="match status" value="1"/>
</dbReference>
<dbReference type="PROSITE" id="PS00609">
    <property type="entry name" value="GLYCOSYL_HYDROL_F32"/>
    <property type="match status" value="1"/>
</dbReference>
<proteinExistence type="evidence at transcript level"/>
<reference key="1">
    <citation type="submission" date="2003-01" db="EMBL/GenBank/DDBJ databases">
        <title>Identification of four invertase genes with expression in the rice anther.</title>
        <authorList>
            <person name="Oliver S.N."/>
            <person name="Fernandes S.Q."/>
            <person name="Dennis E.S."/>
            <person name="Dolferus R."/>
        </authorList>
    </citation>
    <scope>NUCLEOTIDE SEQUENCE [GENOMIC DNA]</scope>
    <source>
        <strain>cv. IR36</strain>
    </source>
</reference>
<reference key="2">
    <citation type="submission" date="2003-07" db="EMBL/GenBank/DDBJ databases">
        <title>Characterization of three rice cell wall invertase genes.</title>
        <authorList>
            <person name="Wang Y.-Q."/>
            <person name="Zhu Z."/>
        </authorList>
    </citation>
    <scope>NUCLEOTIDE SEQUENCE [MRNA]</scope>
    <source>
        <strain>cv. Minghui 86</strain>
    </source>
</reference>
<reference key="3">
    <citation type="journal article" date="2002" name="Nature">
        <title>Sequence and analysis of rice chromosome 4.</title>
        <authorList>
            <person name="Feng Q."/>
            <person name="Zhang Y."/>
            <person name="Hao P."/>
            <person name="Wang S."/>
            <person name="Fu G."/>
            <person name="Huang Y."/>
            <person name="Li Y."/>
            <person name="Zhu J."/>
            <person name="Liu Y."/>
            <person name="Hu X."/>
            <person name="Jia P."/>
            <person name="Zhang Y."/>
            <person name="Zhao Q."/>
            <person name="Ying K."/>
            <person name="Yu S."/>
            <person name="Tang Y."/>
            <person name="Weng Q."/>
            <person name="Zhang L."/>
            <person name="Lu Y."/>
            <person name="Mu J."/>
            <person name="Lu Y."/>
            <person name="Zhang L.S."/>
            <person name="Yu Z."/>
            <person name="Fan D."/>
            <person name="Liu X."/>
            <person name="Lu T."/>
            <person name="Li C."/>
            <person name="Wu Y."/>
            <person name="Sun T."/>
            <person name="Lei H."/>
            <person name="Li T."/>
            <person name="Hu H."/>
            <person name="Guan J."/>
            <person name="Wu M."/>
            <person name="Zhang R."/>
            <person name="Zhou B."/>
            <person name="Chen Z."/>
            <person name="Chen L."/>
            <person name="Jin Z."/>
            <person name="Wang R."/>
            <person name="Yin H."/>
            <person name="Cai Z."/>
            <person name="Ren S."/>
            <person name="Lv G."/>
            <person name="Gu W."/>
            <person name="Zhu G."/>
            <person name="Tu Y."/>
            <person name="Jia J."/>
            <person name="Zhang Y."/>
            <person name="Chen J."/>
            <person name="Kang H."/>
            <person name="Chen X."/>
            <person name="Shao C."/>
            <person name="Sun Y."/>
            <person name="Hu Q."/>
            <person name="Zhang X."/>
            <person name="Zhang W."/>
            <person name="Wang L."/>
            <person name="Ding C."/>
            <person name="Sheng H."/>
            <person name="Gu J."/>
            <person name="Chen S."/>
            <person name="Ni L."/>
            <person name="Zhu F."/>
            <person name="Chen W."/>
            <person name="Lan L."/>
            <person name="Lai Y."/>
            <person name="Cheng Z."/>
            <person name="Gu M."/>
            <person name="Jiang J."/>
            <person name="Li J."/>
            <person name="Hong G."/>
            <person name="Xue Y."/>
            <person name="Han B."/>
        </authorList>
    </citation>
    <scope>NUCLEOTIDE SEQUENCE [LARGE SCALE GENOMIC DNA]</scope>
    <source>
        <strain>cv. Guang-Lu-Ai No.4</strain>
    </source>
</reference>
<reference key="4">
    <citation type="journal article" date="2005" name="PLoS Biol.">
        <title>The genomes of Oryza sativa: a history of duplications.</title>
        <authorList>
            <person name="Yu J."/>
            <person name="Wang J."/>
            <person name="Lin W."/>
            <person name="Li S."/>
            <person name="Li H."/>
            <person name="Zhou J."/>
            <person name="Ni P."/>
            <person name="Dong W."/>
            <person name="Hu S."/>
            <person name="Zeng C."/>
            <person name="Zhang J."/>
            <person name="Zhang Y."/>
            <person name="Li R."/>
            <person name="Xu Z."/>
            <person name="Li S."/>
            <person name="Li X."/>
            <person name="Zheng H."/>
            <person name="Cong L."/>
            <person name="Lin L."/>
            <person name="Yin J."/>
            <person name="Geng J."/>
            <person name="Li G."/>
            <person name="Shi J."/>
            <person name="Liu J."/>
            <person name="Lv H."/>
            <person name="Li J."/>
            <person name="Wang J."/>
            <person name="Deng Y."/>
            <person name="Ran L."/>
            <person name="Shi X."/>
            <person name="Wang X."/>
            <person name="Wu Q."/>
            <person name="Li C."/>
            <person name="Ren X."/>
            <person name="Wang J."/>
            <person name="Wang X."/>
            <person name="Li D."/>
            <person name="Liu D."/>
            <person name="Zhang X."/>
            <person name="Ji Z."/>
            <person name="Zhao W."/>
            <person name="Sun Y."/>
            <person name="Zhang Z."/>
            <person name="Bao J."/>
            <person name="Han Y."/>
            <person name="Dong L."/>
            <person name="Ji J."/>
            <person name="Chen P."/>
            <person name="Wu S."/>
            <person name="Liu J."/>
            <person name="Xiao Y."/>
            <person name="Bu D."/>
            <person name="Tan J."/>
            <person name="Yang L."/>
            <person name="Ye C."/>
            <person name="Zhang J."/>
            <person name="Xu J."/>
            <person name="Zhou Y."/>
            <person name="Yu Y."/>
            <person name="Zhang B."/>
            <person name="Zhuang S."/>
            <person name="Wei H."/>
            <person name="Liu B."/>
            <person name="Lei M."/>
            <person name="Yu H."/>
            <person name="Li Y."/>
            <person name="Xu H."/>
            <person name="Wei S."/>
            <person name="He X."/>
            <person name="Fang L."/>
            <person name="Zhang Z."/>
            <person name="Zhang Y."/>
            <person name="Huang X."/>
            <person name="Su Z."/>
            <person name="Tong W."/>
            <person name="Li J."/>
            <person name="Tong Z."/>
            <person name="Li S."/>
            <person name="Ye J."/>
            <person name="Wang L."/>
            <person name="Fang L."/>
            <person name="Lei T."/>
            <person name="Chen C.-S."/>
            <person name="Chen H.-C."/>
            <person name="Xu Z."/>
            <person name="Li H."/>
            <person name="Huang H."/>
            <person name="Zhang F."/>
            <person name="Xu H."/>
            <person name="Li N."/>
            <person name="Zhao C."/>
            <person name="Li S."/>
            <person name="Dong L."/>
            <person name="Huang Y."/>
            <person name="Li L."/>
            <person name="Xi Y."/>
            <person name="Qi Q."/>
            <person name="Li W."/>
            <person name="Zhang B."/>
            <person name="Hu W."/>
            <person name="Zhang Y."/>
            <person name="Tian X."/>
            <person name="Jiao Y."/>
            <person name="Liang X."/>
            <person name="Jin J."/>
            <person name="Gao L."/>
            <person name="Zheng W."/>
            <person name="Hao B."/>
            <person name="Liu S.-M."/>
            <person name="Wang W."/>
            <person name="Yuan L."/>
            <person name="Cao M."/>
            <person name="McDermott J."/>
            <person name="Samudrala R."/>
            <person name="Wang J."/>
            <person name="Wong G.K.-S."/>
            <person name="Yang H."/>
        </authorList>
    </citation>
    <scope>NUCLEOTIDE SEQUENCE [LARGE SCALE GENOMIC DNA]</scope>
    <source>
        <strain>cv. 93-11</strain>
    </source>
</reference>
<gene>
    <name type="primary">CIN3</name>
    <name type="synonym">INV4</name>
    <name type="ORF">OsI_015274</name>
    <name type="ORF">OSIGBa0134P10.8</name>
</gene>
<protein>
    <recommendedName>
        <fullName>Beta-fructofuranosidase, insoluble isoenzyme 3</fullName>
        <ecNumber>3.2.1.26</ecNumber>
    </recommendedName>
    <alternativeName>
        <fullName>Cell wall beta-fructosidase 3</fullName>
    </alternativeName>
    <alternativeName>
        <fullName>Invertase 3</fullName>
    </alternativeName>
    <alternativeName>
        <fullName>OsCIN3</fullName>
    </alternativeName>
    <alternativeName>
        <fullName>Sucrose hydrolase 3</fullName>
    </alternativeName>
</protein>